<accession>Q24738</accession>
<reference key="1">
    <citation type="journal article" date="1993" name="Proc. Natl. Acad. Sci. U.S.A.">
        <title>The interaction of bride of sevenless with sevenless is conserved between Drosophila virilis and Drosophila melanogaster.</title>
        <authorList>
            <person name="Hart A.C."/>
            <person name="Harrison S.D."/>
            <person name="van Vactor D.L. Jr."/>
            <person name="Rubin G.M."/>
            <person name="Zipursky S.L."/>
        </authorList>
    </citation>
    <scope>NUCLEOTIDE SEQUENCE [GENOMIC DNA]</scope>
</reference>
<feature type="signal peptide" evidence="1">
    <location>
        <begin position="1"/>
        <end position="30"/>
    </location>
</feature>
<feature type="chain" id="PRO_0000012972" description="Protein bride of sevenless">
    <location>
        <begin position="31"/>
        <end position="893"/>
    </location>
</feature>
<feature type="topological domain" description="Extracellular" evidence="1">
    <location>
        <begin position="32"/>
        <end position="530"/>
    </location>
</feature>
<feature type="transmembrane region" description="Helical" evidence="1">
    <location>
        <begin position="531"/>
        <end position="551"/>
    </location>
</feature>
<feature type="transmembrane region" description="Helical" evidence="1">
    <location>
        <begin position="563"/>
        <end position="583"/>
    </location>
</feature>
<feature type="transmembrane region" description="Helical" evidence="1">
    <location>
        <begin position="607"/>
        <end position="627"/>
    </location>
</feature>
<feature type="transmembrane region" description="Helical" evidence="1">
    <location>
        <begin position="630"/>
        <end position="650"/>
    </location>
</feature>
<feature type="transmembrane region" description="Helical" evidence="1">
    <location>
        <begin position="653"/>
        <end position="673"/>
    </location>
</feature>
<feature type="transmembrane region" description="Helical" evidence="1">
    <location>
        <begin position="692"/>
        <end position="712"/>
    </location>
</feature>
<feature type="transmembrane region" description="Helical" evidence="1">
    <location>
        <begin position="722"/>
        <end position="742"/>
    </location>
</feature>
<feature type="transmembrane region" description="Helical" evidence="1">
    <location>
        <begin position="752"/>
        <end position="772"/>
    </location>
</feature>
<feature type="topological domain" description="Cytoplasmic" evidence="1">
    <location>
        <begin position="773"/>
        <end position="893"/>
    </location>
</feature>
<feature type="region of interest" description="Disordered" evidence="2">
    <location>
        <begin position="36"/>
        <end position="66"/>
    </location>
</feature>
<feature type="region of interest" description="Disordered" evidence="2">
    <location>
        <begin position="82"/>
        <end position="102"/>
    </location>
</feature>
<feature type="region of interest" description="Disordered" evidence="2">
    <location>
        <begin position="858"/>
        <end position="893"/>
    </location>
</feature>
<feature type="compositionally biased region" description="Polar residues" evidence="2">
    <location>
        <begin position="50"/>
        <end position="66"/>
    </location>
</feature>
<feature type="glycosylation site" description="N-linked (GlcNAc...) asparagine" evidence="1">
    <location>
        <position position="183"/>
    </location>
</feature>
<feature type="glycosylation site" description="N-linked (GlcNAc...) asparagine" evidence="1">
    <location>
        <position position="307"/>
    </location>
</feature>
<feature type="glycosylation site" description="N-linked (GlcNAc...) asparagine" evidence="1">
    <location>
        <position position="328"/>
    </location>
</feature>
<feature type="glycosylation site" description="N-linked (GlcNAc...) asparagine" evidence="1">
    <location>
        <position position="471"/>
    </location>
</feature>
<feature type="glycosylation site" description="N-linked (GlcNAc...) asparagine" evidence="1">
    <location>
        <position position="482"/>
    </location>
</feature>
<dbReference type="EMBL" id="L08132">
    <property type="protein sequence ID" value="AAA72332.1"/>
    <property type="molecule type" value="Genomic_DNA"/>
</dbReference>
<dbReference type="PIR" id="A47550">
    <property type="entry name" value="A47550"/>
</dbReference>
<dbReference type="SMR" id="Q24738"/>
<dbReference type="GlyCosmos" id="Q24738">
    <property type="glycosylation" value="5 sites, No reported glycans"/>
</dbReference>
<dbReference type="eggNOG" id="KOG1056">
    <property type="taxonomic scope" value="Eukaryota"/>
</dbReference>
<dbReference type="OrthoDB" id="9880600at2759"/>
<dbReference type="GO" id="GO:0005886">
    <property type="term" value="C:plasma membrane"/>
    <property type="evidence" value="ECO:0007669"/>
    <property type="project" value="UniProtKB-SubCell"/>
</dbReference>
<dbReference type="GO" id="GO:0004930">
    <property type="term" value="F:G protein-coupled receptor activity"/>
    <property type="evidence" value="ECO:0007669"/>
    <property type="project" value="UniProtKB-KW"/>
</dbReference>
<dbReference type="GO" id="GO:0005118">
    <property type="term" value="F:sevenless binding"/>
    <property type="evidence" value="ECO:0007669"/>
    <property type="project" value="InterPro"/>
</dbReference>
<dbReference type="GO" id="GO:0007601">
    <property type="term" value="P:visual perception"/>
    <property type="evidence" value="ECO:0007669"/>
    <property type="project" value="UniProtKB-KW"/>
</dbReference>
<dbReference type="InterPro" id="IPR002956">
    <property type="entry name" value="Bride_of_7less"/>
</dbReference>
<dbReference type="InterPro" id="IPR017978">
    <property type="entry name" value="GPCR_3_C"/>
</dbReference>
<dbReference type="InterPro" id="IPR050726">
    <property type="entry name" value="mGluR"/>
</dbReference>
<dbReference type="PANTHER" id="PTHR24060">
    <property type="entry name" value="METABOTROPIC GLUTAMATE RECEPTOR"/>
    <property type="match status" value="1"/>
</dbReference>
<dbReference type="Pfam" id="PF00003">
    <property type="entry name" value="7tm_3"/>
    <property type="match status" value="1"/>
</dbReference>
<dbReference type="PRINTS" id="PR01223">
    <property type="entry name" value="BRIDEOF7LESS"/>
</dbReference>
<organism>
    <name type="scientific">Drosophila virilis</name>
    <name type="common">Fruit fly</name>
    <dbReference type="NCBI Taxonomy" id="7244"/>
    <lineage>
        <taxon>Eukaryota</taxon>
        <taxon>Metazoa</taxon>
        <taxon>Ecdysozoa</taxon>
        <taxon>Arthropoda</taxon>
        <taxon>Hexapoda</taxon>
        <taxon>Insecta</taxon>
        <taxon>Pterygota</taxon>
        <taxon>Neoptera</taxon>
        <taxon>Endopterygota</taxon>
        <taxon>Diptera</taxon>
        <taxon>Brachycera</taxon>
        <taxon>Muscomorpha</taxon>
        <taxon>Ephydroidea</taxon>
        <taxon>Drosophilidae</taxon>
        <taxon>Drosophila</taxon>
    </lineage>
</organism>
<name>BOSS_DROVI</name>
<sequence>MSGLQLIWKSPTQLVLFVLLITISCIDLCHAVGAATPTKKSPPVRITKPQPVSSTTTAIPTTNEGSTTGEQLALLVSSTTEGTASSASSSSNGGSDDSSSTTAAGSLVPEICITGLQLSFTNADGEQVVRKQQELVQVIEGDVMLSVITSDPVSALFVINRVNQANLISADFEVGIRAINVDNASLAENLLIQEVQYLQQCTQYSMGIFIDFDLYKRLESIIRDLEYNVWPIPSARAHLFPKVAHLLHQMPWGEKIASVEIVTETLDIYNEFMDAARQEHMCLMHFKSDDNVYILFGNKMANHFKENGTVFAVPTERTEHIFLEELPNKSFILMENGIELRTADLDPMPTTLDEVLIGKSVLPSRILVFASPIVDLMNWLRGSLAKHCKRDEDLYMLESCFNFLNFIEDWRTPEYRRTHDTAELLSLLRMRKLSTSMLFQMYQKKQETVDVITGESRMELREIASQNFVTNVTTYYHYNRDNHTSLELKTKFGLVFNCQFTAGENRRYPFLFDGESVMFWRIKLDTWVATGLTAAILGLIATLAILVFIVVRISLGDVFEGNPVTSILLLLSLILVFCSFVPFSMEYVGEQRNSHVTFEDVHTLNTLCGVRVFIMTLVYCFVFSLLLCRAVMLASIGSEGGFLSHVNGYIQAIICVLSVFVQVGMSVQLLVVMHLASESVSCENIYYGRWLWGLLAYDFLLLCSLVSLVPFIYRSQRNYREGILIVIGAVLILIIWSVWIALSMFGDEWRDAAIPLGMQASGWAVLVGILIPRTFLIVRGIERSDIAQALPSLTSLAFAQNNQYSSEQSVYECVNPAMRHCSQEEMNHQSPSEIPTLPLRGGGPRRQQFFANLRQANANINPQRPPPHPQQSPSRSSVCSLPPSPDHSKITRF</sequence>
<evidence type="ECO:0000255" key="1"/>
<evidence type="ECO:0000256" key="2">
    <source>
        <dbReference type="SAM" id="MobiDB-lite"/>
    </source>
</evidence>
<evidence type="ECO:0000305" key="3"/>
<keyword id="KW-1003">Cell membrane</keyword>
<keyword id="KW-0297">G-protein coupled receptor</keyword>
<keyword id="KW-0325">Glycoprotein</keyword>
<keyword id="KW-0472">Membrane</keyword>
<keyword id="KW-0675">Receptor</keyword>
<keyword id="KW-0716">Sensory transduction</keyword>
<keyword id="KW-0732">Signal</keyword>
<keyword id="KW-0807">Transducer</keyword>
<keyword id="KW-0812">Transmembrane</keyword>
<keyword id="KW-1133">Transmembrane helix</keyword>
<keyword id="KW-0844">Vision</keyword>
<gene>
    <name type="primary">boss</name>
</gene>
<proteinExistence type="inferred from homology"/>
<comment type="function">
    <text>Acts as a ligand for sevenless tyrosine-kinase receptor during eye development.</text>
</comment>
<comment type="subcellular location">
    <subcellularLocation>
        <location evidence="3">Cell membrane</location>
        <topology evidence="3">Multi-pass membrane protein</topology>
    </subcellularLocation>
</comment>
<comment type="similarity">
    <text evidence="3">Belongs to the G-protein coupled receptor 3 family.</text>
</comment>
<protein>
    <recommendedName>
        <fullName>Protein bride of sevenless</fullName>
    </recommendedName>
</protein>